<keyword id="KW-0067">ATP-binding</keyword>
<keyword id="KW-0119">Carbohydrate metabolism</keyword>
<keyword id="KW-0418">Kinase</keyword>
<keyword id="KW-0460">Magnesium</keyword>
<keyword id="KW-0479">Metal-binding</keyword>
<keyword id="KW-0511">Multifunctional enzyme</keyword>
<keyword id="KW-0547">Nucleotide-binding</keyword>
<keyword id="KW-1185">Reference proteome</keyword>
<keyword id="KW-0723">Serine/threonine-protein kinase</keyword>
<keyword id="KW-0808">Transferase</keyword>
<feature type="chain" id="PRO_0000058968" description="HPr kinase/phosphorylase">
    <location>
        <begin position="1"/>
        <end position="312"/>
    </location>
</feature>
<feature type="region of interest" description="Important for the catalytic mechanism of both phosphorylation and dephosphorylation" evidence="1">
    <location>
        <begin position="202"/>
        <end position="211"/>
    </location>
</feature>
<feature type="region of interest" description="Important for the catalytic mechanism of dephosphorylation" evidence="1">
    <location>
        <begin position="265"/>
        <end position="270"/>
    </location>
</feature>
<feature type="active site" evidence="1">
    <location>
        <position position="139"/>
    </location>
</feature>
<feature type="active site" evidence="1">
    <location>
        <position position="160"/>
    </location>
</feature>
<feature type="active site" description="Proton acceptor; for phosphorylation activity. Proton donor; for dephosphorylation activity" evidence="1">
    <location>
        <position position="178"/>
    </location>
</feature>
<feature type="active site" evidence="1">
    <location>
        <position position="244"/>
    </location>
</feature>
<feature type="binding site" evidence="1">
    <location>
        <begin position="154"/>
        <end position="161"/>
    </location>
    <ligand>
        <name>ATP</name>
        <dbReference type="ChEBI" id="CHEBI:30616"/>
    </ligand>
</feature>
<feature type="binding site" evidence="1">
    <location>
        <position position="161"/>
    </location>
    <ligand>
        <name>Mg(2+)</name>
        <dbReference type="ChEBI" id="CHEBI:18420"/>
    </ligand>
</feature>
<feature type="binding site" evidence="1">
    <location>
        <position position="203"/>
    </location>
    <ligand>
        <name>Mg(2+)</name>
        <dbReference type="ChEBI" id="CHEBI:18420"/>
    </ligand>
</feature>
<name>HPRK_LISMO</name>
<reference key="1">
    <citation type="journal article" date="2001" name="Science">
        <title>Comparative genomics of Listeria species.</title>
        <authorList>
            <person name="Glaser P."/>
            <person name="Frangeul L."/>
            <person name="Buchrieser C."/>
            <person name="Rusniok C."/>
            <person name="Amend A."/>
            <person name="Baquero F."/>
            <person name="Berche P."/>
            <person name="Bloecker H."/>
            <person name="Brandt P."/>
            <person name="Chakraborty T."/>
            <person name="Charbit A."/>
            <person name="Chetouani F."/>
            <person name="Couve E."/>
            <person name="de Daruvar A."/>
            <person name="Dehoux P."/>
            <person name="Domann E."/>
            <person name="Dominguez-Bernal G."/>
            <person name="Duchaud E."/>
            <person name="Durant L."/>
            <person name="Dussurget O."/>
            <person name="Entian K.-D."/>
            <person name="Fsihi H."/>
            <person name="Garcia-del Portillo F."/>
            <person name="Garrido P."/>
            <person name="Gautier L."/>
            <person name="Goebel W."/>
            <person name="Gomez-Lopez N."/>
            <person name="Hain T."/>
            <person name="Hauf J."/>
            <person name="Jackson D."/>
            <person name="Jones L.-M."/>
            <person name="Kaerst U."/>
            <person name="Kreft J."/>
            <person name="Kuhn M."/>
            <person name="Kunst F."/>
            <person name="Kurapkat G."/>
            <person name="Madueno E."/>
            <person name="Maitournam A."/>
            <person name="Mata Vicente J."/>
            <person name="Ng E."/>
            <person name="Nedjari H."/>
            <person name="Nordsiek G."/>
            <person name="Novella S."/>
            <person name="de Pablos B."/>
            <person name="Perez-Diaz J.-C."/>
            <person name="Purcell R."/>
            <person name="Remmel B."/>
            <person name="Rose M."/>
            <person name="Schlueter T."/>
            <person name="Simoes N."/>
            <person name="Tierrez A."/>
            <person name="Vazquez-Boland J.-A."/>
            <person name="Voss H."/>
            <person name="Wehland J."/>
            <person name="Cossart P."/>
        </authorList>
    </citation>
    <scope>NUCLEOTIDE SEQUENCE [LARGE SCALE GENOMIC DNA]</scope>
    <source>
        <strain>ATCC BAA-679 / EGD-e</strain>
    </source>
</reference>
<organism>
    <name type="scientific">Listeria monocytogenes serovar 1/2a (strain ATCC BAA-679 / EGD-e)</name>
    <dbReference type="NCBI Taxonomy" id="169963"/>
    <lineage>
        <taxon>Bacteria</taxon>
        <taxon>Bacillati</taxon>
        <taxon>Bacillota</taxon>
        <taxon>Bacilli</taxon>
        <taxon>Bacillales</taxon>
        <taxon>Listeriaceae</taxon>
        <taxon>Listeria</taxon>
    </lineage>
</organism>
<sequence>MTKSVTVKDLKERLNLELICSETGLERPISTSDLSRPGLELTGFFSYYPEDRVQLFGMTEISFSEGMEPEERLKRYKQMCTKRTPAFVISRNLEVPKELVAAAKEADIPVLRSRLKTTRLSVYITNYLESRLAPVISMHGVLVDIYGLGVLITGSSGVGKSETALELVKRGHRLVADDNVEIRQEDEMTLIGSSPAIIEHLLEIRGLGIINVMTLFGAGAVRSSKKITIVVHLENWDPDKHYDRVGLDQEKTKIFDMDIPKITVPVRPGRNLSVIIEVAAMNFRLKNMGYNAAEQFTQDLNNLIGHNSSMND</sequence>
<dbReference type="EC" id="2.7.11.-" evidence="1"/>
<dbReference type="EC" id="2.7.4.-" evidence="1"/>
<dbReference type="EMBL" id="AL591983">
    <property type="protein sequence ID" value="CAD00561.1"/>
    <property type="molecule type" value="Genomic_DNA"/>
</dbReference>
<dbReference type="PIR" id="AC1385">
    <property type="entry name" value="AC1385"/>
</dbReference>
<dbReference type="RefSeq" id="NP_466006.1">
    <property type="nucleotide sequence ID" value="NC_003210.1"/>
</dbReference>
<dbReference type="RefSeq" id="WP_003722615.1">
    <property type="nucleotide sequence ID" value="NZ_CP149495.1"/>
</dbReference>
<dbReference type="SMR" id="Q8Y4G1"/>
<dbReference type="STRING" id="169963.gene:17595194"/>
<dbReference type="PaxDb" id="169963-lmo2483"/>
<dbReference type="EnsemblBacteria" id="CAD00561">
    <property type="protein sequence ID" value="CAD00561"/>
    <property type="gene ID" value="CAD00561"/>
</dbReference>
<dbReference type="GeneID" id="987330"/>
<dbReference type="KEGG" id="lmo:lmo2483"/>
<dbReference type="PATRIC" id="fig|169963.11.peg.2543"/>
<dbReference type="eggNOG" id="COG1493">
    <property type="taxonomic scope" value="Bacteria"/>
</dbReference>
<dbReference type="HOGENOM" id="CLU_052030_0_1_9"/>
<dbReference type="OrthoDB" id="9778803at2"/>
<dbReference type="PhylomeDB" id="Q8Y4G1"/>
<dbReference type="BioCyc" id="LMON169963:LMO2483-MONOMER"/>
<dbReference type="Proteomes" id="UP000000817">
    <property type="component" value="Chromosome"/>
</dbReference>
<dbReference type="GO" id="GO:0005829">
    <property type="term" value="C:cytosol"/>
    <property type="evidence" value="ECO:0000318"/>
    <property type="project" value="GO_Central"/>
</dbReference>
<dbReference type="GO" id="GO:0005524">
    <property type="term" value="F:ATP binding"/>
    <property type="evidence" value="ECO:0007669"/>
    <property type="project" value="UniProtKB-UniRule"/>
</dbReference>
<dbReference type="GO" id="GO:0000287">
    <property type="term" value="F:magnesium ion binding"/>
    <property type="evidence" value="ECO:0007669"/>
    <property type="project" value="UniProtKB-UniRule"/>
</dbReference>
<dbReference type="GO" id="GO:0000155">
    <property type="term" value="F:phosphorelay sensor kinase activity"/>
    <property type="evidence" value="ECO:0007669"/>
    <property type="project" value="InterPro"/>
</dbReference>
<dbReference type="GO" id="GO:0004674">
    <property type="term" value="F:protein serine/threonine kinase activity"/>
    <property type="evidence" value="ECO:0007669"/>
    <property type="project" value="UniProtKB-KW"/>
</dbReference>
<dbReference type="GO" id="GO:0004712">
    <property type="term" value="F:protein serine/threonine/tyrosine kinase activity"/>
    <property type="evidence" value="ECO:0007669"/>
    <property type="project" value="UniProtKB-UniRule"/>
</dbReference>
<dbReference type="GO" id="GO:0006109">
    <property type="term" value="P:regulation of carbohydrate metabolic process"/>
    <property type="evidence" value="ECO:0007669"/>
    <property type="project" value="UniProtKB-UniRule"/>
</dbReference>
<dbReference type="CDD" id="cd01918">
    <property type="entry name" value="HprK_C"/>
    <property type="match status" value="1"/>
</dbReference>
<dbReference type="FunFam" id="3.40.1390.20:FF:000002">
    <property type="entry name" value="HPr kinase/phosphorylase"/>
    <property type="match status" value="1"/>
</dbReference>
<dbReference type="FunFam" id="3.40.50.300:FF:000174">
    <property type="entry name" value="HPr kinase/phosphorylase"/>
    <property type="match status" value="1"/>
</dbReference>
<dbReference type="Gene3D" id="3.40.1390.20">
    <property type="entry name" value="HprK N-terminal domain-like"/>
    <property type="match status" value="1"/>
</dbReference>
<dbReference type="Gene3D" id="3.40.50.300">
    <property type="entry name" value="P-loop containing nucleotide triphosphate hydrolases"/>
    <property type="match status" value="1"/>
</dbReference>
<dbReference type="HAMAP" id="MF_01249">
    <property type="entry name" value="HPr_kinase"/>
    <property type="match status" value="1"/>
</dbReference>
<dbReference type="InterPro" id="IPR003755">
    <property type="entry name" value="HPr(Ser)_kin/Pase"/>
</dbReference>
<dbReference type="InterPro" id="IPR011104">
    <property type="entry name" value="Hpr_kin/Pase_C"/>
</dbReference>
<dbReference type="InterPro" id="IPR011126">
    <property type="entry name" value="Hpr_kin/Pase_Hpr_N"/>
</dbReference>
<dbReference type="InterPro" id="IPR027417">
    <property type="entry name" value="P-loop_NTPase"/>
</dbReference>
<dbReference type="InterPro" id="IPR028979">
    <property type="entry name" value="Ser_kin/Pase_Hpr-like_N_sf"/>
</dbReference>
<dbReference type="NCBIfam" id="TIGR00679">
    <property type="entry name" value="hpr-ser"/>
    <property type="match status" value="1"/>
</dbReference>
<dbReference type="PANTHER" id="PTHR30305:SF1">
    <property type="entry name" value="HPR KINASE_PHOSPHORYLASE"/>
    <property type="match status" value="1"/>
</dbReference>
<dbReference type="PANTHER" id="PTHR30305">
    <property type="entry name" value="PROTEIN YJDM-RELATED"/>
    <property type="match status" value="1"/>
</dbReference>
<dbReference type="Pfam" id="PF07475">
    <property type="entry name" value="Hpr_kinase_C"/>
    <property type="match status" value="1"/>
</dbReference>
<dbReference type="Pfam" id="PF02603">
    <property type="entry name" value="Hpr_kinase_N"/>
    <property type="match status" value="1"/>
</dbReference>
<dbReference type="SUPFAM" id="SSF75138">
    <property type="entry name" value="HprK N-terminal domain-like"/>
    <property type="match status" value="1"/>
</dbReference>
<dbReference type="SUPFAM" id="SSF53795">
    <property type="entry name" value="PEP carboxykinase-like"/>
    <property type="match status" value="1"/>
</dbReference>
<gene>
    <name evidence="1" type="primary">hprK</name>
    <name type="ordered locus">lmo2483</name>
</gene>
<proteinExistence type="inferred from homology"/>
<protein>
    <recommendedName>
        <fullName evidence="1">HPr kinase/phosphorylase</fullName>
        <shortName evidence="1">HPrK/P</shortName>
        <ecNumber evidence="1">2.7.11.-</ecNumber>
        <ecNumber evidence="1">2.7.4.-</ecNumber>
    </recommendedName>
    <alternativeName>
        <fullName evidence="1">HPr(Ser) kinase/phosphorylase</fullName>
    </alternativeName>
</protein>
<accession>Q8Y4G1</accession>
<evidence type="ECO:0000255" key="1">
    <source>
        <dbReference type="HAMAP-Rule" id="MF_01249"/>
    </source>
</evidence>
<comment type="function">
    <text evidence="1">Catalyzes the ATP- as well as the pyrophosphate-dependent phosphorylation of a specific serine residue in HPr, a phosphocarrier protein of the phosphoenolpyruvate-dependent sugar phosphotransferase system (PTS). HprK/P also catalyzes the pyrophosphate-producing, inorganic phosphate-dependent dephosphorylation (phosphorolysis) of seryl-phosphorylated HPr (P-Ser-HPr). The two antagonistic activities of HprK/P are regulated by several intracellular metabolites, which change their concentration in response to the absence or presence of rapidly metabolisable carbon sources (glucose, fructose, etc.) in the growth medium. Therefore, by controlling the phosphorylation state of HPr, HPrK/P is a sensor enzyme that plays a major role in the regulation of carbon metabolism and sugar transport: it mediates carbon catabolite repression (CCR), and regulates PTS-catalyzed carbohydrate uptake and inducer exclusion.</text>
</comment>
<comment type="catalytic activity">
    <reaction evidence="1">
        <text>[HPr protein]-L-serine + ATP = [HPr protein]-O-phospho-L-serine + ADP + H(+)</text>
        <dbReference type="Rhea" id="RHEA:46600"/>
        <dbReference type="Rhea" id="RHEA-COMP:11602"/>
        <dbReference type="Rhea" id="RHEA-COMP:11603"/>
        <dbReference type="ChEBI" id="CHEBI:15378"/>
        <dbReference type="ChEBI" id="CHEBI:29999"/>
        <dbReference type="ChEBI" id="CHEBI:30616"/>
        <dbReference type="ChEBI" id="CHEBI:83421"/>
        <dbReference type="ChEBI" id="CHEBI:456216"/>
    </reaction>
</comment>
<comment type="catalytic activity">
    <reaction evidence="1">
        <text>[HPr protein]-O-phospho-L-serine + phosphate + H(+) = [HPr protein]-L-serine + diphosphate</text>
        <dbReference type="Rhea" id="RHEA:46604"/>
        <dbReference type="Rhea" id="RHEA-COMP:11602"/>
        <dbReference type="Rhea" id="RHEA-COMP:11603"/>
        <dbReference type="ChEBI" id="CHEBI:15378"/>
        <dbReference type="ChEBI" id="CHEBI:29999"/>
        <dbReference type="ChEBI" id="CHEBI:33019"/>
        <dbReference type="ChEBI" id="CHEBI:43474"/>
        <dbReference type="ChEBI" id="CHEBI:83421"/>
    </reaction>
</comment>
<comment type="cofactor">
    <cofactor evidence="1">
        <name>Mg(2+)</name>
        <dbReference type="ChEBI" id="CHEBI:18420"/>
    </cofactor>
</comment>
<comment type="subunit">
    <text evidence="1">Homohexamer.</text>
</comment>
<comment type="domain">
    <text evidence="1">The Walker A ATP-binding motif also binds Pi and PPi.</text>
</comment>
<comment type="miscellaneous">
    <text evidence="1">Both phosphorylation and phosphorolysis are carried out by the same active site and suggest a common mechanism for both reactions.</text>
</comment>
<comment type="similarity">
    <text evidence="1">Belongs to the HPrK/P family.</text>
</comment>